<comment type="function">
    <text evidence="1">Receptor tyrosine kinase which binds promiscuously GPI-anchored ephrin-A family ligands residing on adjacent cells, leading to contact-dependent bidirectional signaling into neighboring cells. The signaling pathway downstream of the receptor is referred to as forward signaling while the signaling pathway downstream of the ephrin ligand is referred to as reverse signaling. The GPI-anchored ephrin-A EFNA2, EFNA3, and EFNA5 are able to activate EPHA8 through phosphorylation. With EFNA5 may regulate integrin-mediated cell adhesion and migration on fibronectin substrate but also neurite outgrowth. During development of the nervous system also plays a role in axon guidance. Downstream effectors of the EPHA8 signaling pathway include FYN which promotes cell adhesion upon activation by EPHA8 and the MAP kinases in the stimulation of neurite outgrowth (By similarity).</text>
</comment>
<comment type="catalytic activity">
    <reaction evidence="8">
        <text>L-tyrosyl-[protein] + ATP = O-phospho-L-tyrosyl-[protein] + ADP + H(+)</text>
        <dbReference type="Rhea" id="RHEA:10596"/>
        <dbReference type="Rhea" id="RHEA-COMP:10136"/>
        <dbReference type="Rhea" id="RHEA-COMP:20101"/>
        <dbReference type="ChEBI" id="CHEBI:15378"/>
        <dbReference type="ChEBI" id="CHEBI:30616"/>
        <dbReference type="ChEBI" id="CHEBI:46858"/>
        <dbReference type="ChEBI" id="CHEBI:61978"/>
        <dbReference type="ChEBI" id="CHEBI:456216"/>
        <dbReference type="EC" id="2.7.10.1"/>
    </reaction>
</comment>
<comment type="subunit">
    <text evidence="1 9 11 13 14">Heterotetramer upon binding of the ligand. The heterotetramer is composed of an ephrin dimer and a receptor dimer. Oligomerization is probably required to induce biological responses. May also form heterodimers with other ephrin receptors (By similarity). Interacts with FYN; possible downstream effector of EPHA8 in regulation of cell adhesion. Interacts with PIK3CG; regulates integrin-mediated cell adhesion to substrate. Interacts with TIAM1; regulates clathrin-mediated endocytosis of EPHA8. Interacts with ANKS1A and ANKS1B; EPHA8 kinase activity-independent but stimulated by EPHA8 ubiquitination.</text>
</comment>
<comment type="subcellular location">
    <subcellularLocation>
        <location evidence="2">Cell membrane</location>
        <topology evidence="3">Single-pass type I membrane protein</topology>
    </subcellularLocation>
    <subcellularLocation>
        <location evidence="2">Cell projection</location>
    </subcellularLocation>
    <subcellularLocation>
        <location evidence="2">Early endosome membrane</location>
    </subcellularLocation>
    <text evidence="2">Undergoes clathrin-mediated endocytosis upon EFNA5-binding and is targeted to early endosomes.</text>
</comment>
<comment type="alternative products">
    <event type="alternative splicing"/>
    <isoform>
        <id>P29322-1</id>
        <name>1</name>
        <sequence type="displayed"/>
    </isoform>
    <isoform>
        <id>P29322-2</id>
        <name>2</name>
        <sequence type="described" ref="VSP_041946 VSP_041947"/>
    </isoform>
</comment>
<comment type="PTM">
    <text evidence="1">Phosphorylated. Phosphorylation is stimulated upon binding of its ligands including EFNA2, EFNA3 and EFNA5. Autophosphorylation on Tyr-616 is critical for association with FYN. Autophosphorylation on Tyr-839 modulates tyrosine kinase activity (By similarity).</text>
</comment>
<comment type="PTM">
    <text evidence="1">Ubiquitinated. Ubiquitination by CBL regulates the receptor stability and activity through proteasomal degradation. ANKS1A prevents ubiquitination and degradation (By similarity).</text>
</comment>
<comment type="similarity">
    <text evidence="4">Belongs to the protein kinase superfamily. Tyr protein kinase family. Ephrin receptor subfamily.</text>
</comment>
<comment type="sequence caution" evidence="16">
    <conflict type="erroneous initiation">
        <sequence resource="EMBL-CDS" id="CAA41980"/>
    </conflict>
    <text>Truncated N-terminus.</text>
</comment>
<feature type="signal peptide" evidence="3">
    <location>
        <begin position="1"/>
        <end position="27"/>
    </location>
</feature>
<feature type="chain" id="PRO_0000016822" description="Ephrin type-A receptor 8">
    <location>
        <begin position="28"/>
        <end position="1005"/>
    </location>
</feature>
<feature type="topological domain" description="Extracellular" evidence="3">
    <location>
        <begin position="28"/>
        <end position="542"/>
    </location>
</feature>
<feature type="transmembrane region" description="Helical" evidence="3">
    <location>
        <begin position="543"/>
        <end position="563"/>
    </location>
</feature>
<feature type="topological domain" description="Cytoplasmic" evidence="3">
    <location>
        <begin position="564"/>
        <end position="1005"/>
    </location>
</feature>
<feature type="domain" description="Eph LBD" evidence="7">
    <location>
        <begin position="31"/>
        <end position="209"/>
    </location>
</feature>
<feature type="domain" description="Fibronectin type-III 1" evidence="6">
    <location>
        <begin position="328"/>
        <end position="438"/>
    </location>
</feature>
<feature type="domain" description="Fibronectin type-III 2" evidence="6">
    <location>
        <begin position="439"/>
        <end position="534"/>
    </location>
</feature>
<feature type="domain" description="Protein kinase" evidence="4">
    <location>
        <begin position="635"/>
        <end position="896"/>
    </location>
</feature>
<feature type="domain" description="SAM" evidence="5">
    <location>
        <begin position="930"/>
        <end position="994"/>
    </location>
</feature>
<feature type="region of interest" description="Mediates interaction with ANKS1A and ANKS1B" evidence="1">
    <location>
        <begin position="564"/>
        <end position="570"/>
    </location>
</feature>
<feature type="region of interest" description="Mediates interaction with PIK3CG and required for endocytosis" evidence="1">
    <location>
        <begin position="589"/>
        <end position="644"/>
    </location>
</feature>
<feature type="short sequence motif" description="PDZ-binding" evidence="3">
    <location>
        <begin position="1003"/>
        <end position="1005"/>
    </location>
</feature>
<feature type="active site" description="Proton acceptor" evidence="4 8">
    <location>
        <position position="760"/>
    </location>
</feature>
<feature type="binding site" evidence="4">
    <location>
        <begin position="641"/>
        <end position="649"/>
    </location>
    <ligand>
        <name>ATP</name>
        <dbReference type="ChEBI" id="CHEBI:30616"/>
    </ligand>
</feature>
<feature type="binding site" evidence="4">
    <location>
        <position position="667"/>
    </location>
    <ligand>
        <name>ATP</name>
        <dbReference type="ChEBI" id="CHEBI:30616"/>
    </ligand>
</feature>
<feature type="modified residue" description="Phosphotyrosine; by autocatalysis" evidence="2">
    <location>
        <position position="616"/>
    </location>
</feature>
<feature type="modified residue" description="Phosphotyrosine; by autocatalysis" evidence="2">
    <location>
        <position position="839"/>
    </location>
</feature>
<feature type="glycosylation site" description="N-linked (GlcNAc...) asparagine" evidence="3">
    <location>
        <position position="340"/>
    </location>
</feature>
<feature type="glycosylation site" description="N-linked (GlcNAc...) asparagine" evidence="3">
    <location>
        <position position="407"/>
    </location>
</feature>
<feature type="glycosylation site" description="N-linked (GlcNAc...) asparagine" evidence="3">
    <location>
        <position position="432"/>
    </location>
</feature>
<feature type="splice variant" id="VSP_041946" description="In isoform 2." evidence="15">
    <original>APSQVVVIRQERAGQTSVSLLWQEPEQPNGIILEYEIKYYEKDKEMQSYSTLKAVTT</original>
    <variation>GRRRNSVPQRPGPPASPASDPSRDQSSAGDVLWAFRQVPLWPCAPHQDPELEALHCL</variation>
    <location>
        <begin position="439"/>
        <end position="495"/>
    </location>
</feature>
<feature type="splice variant" id="VSP_041947" description="In isoform 2." evidence="15">
    <location>
        <begin position="496"/>
        <end position="1005"/>
    </location>
</feature>
<feature type="sequence variant" id="VAR_042153" description="In dbSNP:rs45498698." evidence="12">
    <original>G</original>
    <variation>S</variation>
    <location>
        <position position="45"/>
    </location>
</feature>
<feature type="sequence variant" id="VAR_042154" description="In dbSNP:rs56402644." evidence="12">
    <original>V</original>
    <variation>L</variation>
    <location>
        <position position="60"/>
    </location>
</feature>
<feature type="sequence variant" id="VAR_042155" description="In a breast infiltrating ductal carcinoma sample; somatic mutation." evidence="12">
    <original>N</original>
    <variation>K</variation>
    <location>
        <position position="123"/>
    </location>
</feature>
<feature type="sequence variant" id="VAR_042156" description="In a gastric adenocarcinoma sample; somatic mutation; dbSNP:rs1557556639." evidence="12">
    <original>R</original>
    <variation>C</variation>
    <location>
        <position position="179"/>
    </location>
</feature>
<feature type="sequence variant" id="VAR_042157" description="In a lung adenocarcinoma sample; somatic mutation." evidence="12">
    <original>R</original>
    <variation>L</variation>
    <location>
        <position position="198"/>
    </location>
</feature>
<feature type="sequence variant" id="VAR_061292" description="In dbSNP:rs56656925.">
    <original>P</original>
    <variation>L</variation>
    <location>
        <position position="321"/>
    </location>
</feature>
<feature type="sequence variant" id="VAR_022107" description="In dbSNP:rs2295021.">
    <original>V</original>
    <variation>M</variation>
    <location>
        <position position="444"/>
    </location>
</feature>
<feature type="sequence variant" id="VAR_024514" description="In dbSNP:rs999765." evidence="10">
    <original>E</original>
    <variation>Q</variation>
    <location>
        <position position="612"/>
    </location>
</feature>
<feature type="sequence variant" id="VAR_042158" description="In a metastatic melanoma sample; somatic mutation." evidence="12">
    <original>P</original>
    <variation>L</variation>
    <location>
        <position position="860"/>
    </location>
</feature>
<feature type="sequence conflict" description="In Ref. 3; BAA95983." evidence="16" ref="3">
    <original>S</original>
    <variation>L</variation>
    <location>
        <position position="237"/>
    </location>
</feature>
<feature type="strand" evidence="18">
    <location>
        <begin position="456"/>
        <end position="460"/>
    </location>
</feature>
<feature type="strand" evidence="18">
    <location>
        <begin position="472"/>
        <end position="482"/>
    </location>
</feature>
<feature type="strand" evidence="18">
    <location>
        <begin position="488"/>
        <end position="499"/>
    </location>
</feature>
<feature type="strand" evidence="18">
    <location>
        <begin position="507"/>
        <end position="510"/>
    </location>
</feature>
<feature type="strand" evidence="18">
    <location>
        <begin position="512"/>
        <end position="516"/>
    </location>
</feature>
<feature type="strand" evidence="18">
    <location>
        <begin position="527"/>
        <end position="530"/>
    </location>
</feature>
<feature type="helix" evidence="19">
    <location>
        <begin position="632"/>
        <end position="634"/>
    </location>
</feature>
<feature type="strand" evidence="19">
    <location>
        <begin position="635"/>
        <end position="643"/>
    </location>
</feature>
<feature type="turn" evidence="19">
    <location>
        <begin position="644"/>
        <end position="646"/>
    </location>
</feature>
<feature type="strand" evidence="19">
    <location>
        <begin position="647"/>
        <end position="654"/>
    </location>
</feature>
<feature type="strand" evidence="19">
    <location>
        <begin position="662"/>
        <end position="669"/>
    </location>
</feature>
<feature type="helix" evidence="19">
    <location>
        <begin position="675"/>
        <end position="688"/>
    </location>
</feature>
<feature type="strand" evidence="19">
    <location>
        <begin position="699"/>
        <end position="703"/>
    </location>
</feature>
<feature type="helix" evidence="19">
    <location>
        <begin position="705"/>
        <end position="707"/>
    </location>
</feature>
<feature type="strand" evidence="19">
    <location>
        <begin position="710"/>
        <end position="714"/>
    </location>
</feature>
<feature type="helix" evidence="19">
    <location>
        <begin position="721"/>
        <end position="726"/>
    </location>
</feature>
<feature type="turn" evidence="19">
    <location>
        <begin position="727"/>
        <end position="730"/>
    </location>
</feature>
<feature type="helix" evidence="19">
    <location>
        <begin position="734"/>
        <end position="753"/>
    </location>
</feature>
<feature type="helix" evidence="19">
    <location>
        <begin position="763"/>
        <end position="765"/>
    </location>
</feature>
<feature type="strand" evidence="19">
    <location>
        <begin position="766"/>
        <end position="768"/>
    </location>
</feature>
<feature type="strand" evidence="19">
    <location>
        <begin position="774"/>
        <end position="776"/>
    </location>
</feature>
<feature type="helix" evidence="19">
    <location>
        <begin position="802"/>
        <end position="804"/>
    </location>
</feature>
<feature type="helix" evidence="19">
    <location>
        <begin position="807"/>
        <end position="812"/>
    </location>
</feature>
<feature type="helix" evidence="19">
    <location>
        <begin position="817"/>
        <end position="832"/>
    </location>
</feature>
<feature type="turn" evidence="19">
    <location>
        <begin position="833"/>
        <end position="835"/>
    </location>
</feature>
<feature type="turn" evidence="19">
    <location>
        <begin position="838"/>
        <end position="841"/>
    </location>
</feature>
<feature type="helix" evidence="19">
    <location>
        <begin position="844"/>
        <end position="852"/>
    </location>
</feature>
<feature type="helix" evidence="19">
    <location>
        <begin position="865"/>
        <end position="874"/>
    </location>
</feature>
<feature type="helix" evidence="19">
    <location>
        <begin position="879"/>
        <end position="881"/>
    </location>
</feature>
<feature type="helix" evidence="19">
    <location>
        <begin position="885"/>
        <end position="897"/>
    </location>
</feature>
<feature type="helix" evidence="17">
    <location>
        <begin position="935"/>
        <end position="941"/>
    </location>
</feature>
<feature type="helix" evidence="17">
    <location>
        <begin position="945"/>
        <end position="947"/>
    </location>
</feature>
<feature type="helix" evidence="17">
    <location>
        <begin position="948"/>
        <end position="953"/>
    </location>
</feature>
<feature type="helix" evidence="17">
    <location>
        <begin position="959"/>
        <end position="962"/>
    </location>
</feature>
<feature type="helix" evidence="17">
    <location>
        <begin position="967"/>
        <end position="973"/>
    </location>
</feature>
<feature type="helix" evidence="17">
    <location>
        <begin position="978"/>
        <end position="995"/>
    </location>
</feature>
<organism>
    <name type="scientific">Homo sapiens</name>
    <name type="common">Human</name>
    <dbReference type="NCBI Taxonomy" id="9606"/>
    <lineage>
        <taxon>Eukaryota</taxon>
        <taxon>Metazoa</taxon>
        <taxon>Chordata</taxon>
        <taxon>Craniata</taxon>
        <taxon>Vertebrata</taxon>
        <taxon>Euteleostomi</taxon>
        <taxon>Mammalia</taxon>
        <taxon>Eutheria</taxon>
        <taxon>Euarchontoglires</taxon>
        <taxon>Primates</taxon>
        <taxon>Haplorrhini</taxon>
        <taxon>Catarrhini</taxon>
        <taxon>Hominidae</taxon>
        <taxon>Homo</taxon>
    </lineage>
</organism>
<dbReference type="EC" id="2.7.10.1"/>
<dbReference type="EMBL" id="AL035703">
    <property type="status" value="NOT_ANNOTATED_CDS"/>
    <property type="molecule type" value="Genomic_DNA"/>
</dbReference>
<dbReference type="EMBL" id="BC038796">
    <property type="protein sequence ID" value="AAH38796.1"/>
    <property type="molecule type" value="mRNA"/>
</dbReference>
<dbReference type="EMBL" id="BC072417">
    <property type="protein sequence ID" value="AAH72417.2"/>
    <property type="molecule type" value="mRNA"/>
</dbReference>
<dbReference type="EMBL" id="AB040892">
    <property type="protein sequence ID" value="BAA95983.1"/>
    <property type="molecule type" value="mRNA"/>
</dbReference>
<dbReference type="EMBL" id="X59291">
    <property type="protein sequence ID" value="CAA41980.1"/>
    <property type="status" value="ALT_INIT"/>
    <property type="molecule type" value="Genomic_DNA"/>
</dbReference>
<dbReference type="CCDS" id="CCDS225.1">
    <molecule id="P29322-1"/>
</dbReference>
<dbReference type="CCDS" id="CCDS30626.1">
    <molecule id="P29322-2"/>
</dbReference>
<dbReference type="PIR" id="S23361">
    <property type="entry name" value="S23361"/>
</dbReference>
<dbReference type="RefSeq" id="NP_001006944.1">
    <molecule id="P29322-2"/>
    <property type="nucleotide sequence ID" value="NM_001006943.3"/>
</dbReference>
<dbReference type="RefSeq" id="NP_065387.1">
    <molecule id="P29322-1"/>
    <property type="nucleotide sequence ID" value="NM_020526.5"/>
</dbReference>
<dbReference type="PDB" id="1UCV">
    <property type="method" value="NMR"/>
    <property type="chains" value="A=933-1000"/>
</dbReference>
<dbReference type="PDB" id="1X5L">
    <property type="method" value="NMR"/>
    <property type="chains" value="A=437-534"/>
</dbReference>
<dbReference type="PDB" id="3KUL">
    <property type="method" value="X-ray"/>
    <property type="resolution" value="2.15 A"/>
    <property type="chains" value="A/B=602-909"/>
</dbReference>
<dbReference type="PDBsum" id="1UCV"/>
<dbReference type="PDBsum" id="1X5L"/>
<dbReference type="PDBsum" id="3KUL"/>
<dbReference type="BMRB" id="P29322"/>
<dbReference type="SMR" id="P29322"/>
<dbReference type="BioGRID" id="108360">
    <property type="interactions" value="162"/>
</dbReference>
<dbReference type="CORUM" id="P29322"/>
<dbReference type="FunCoup" id="P29322">
    <property type="interactions" value="354"/>
</dbReference>
<dbReference type="IntAct" id="P29322">
    <property type="interactions" value="151"/>
</dbReference>
<dbReference type="MINT" id="P29322"/>
<dbReference type="STRING" id="9606.ENSP00000166244"/>
<dbReference type="BindingDB" id="P29322"/>
<dbReference type="ChEMBL" id="CHEMBL4134"/>
<dbReference type="DrugBank" id="DB12010">
    <property type="generic name" value="Fostamatinib"/>
</dbReference>
<dbReference type="DrugCentral" id="P29322"/>
<dbReference type="GuidetoPHARMACOLOGY" id="1828"/>
<dbReference type="GlyCosmos" id="P29322">
    <property type="glycosylation" value="3 sites, No reported glycans"/>
</dbReference>
<dbReference type="GlyGen" id="P29322">
    <property type="glycosylation" value="4 sites, 1 O-linked glycan (1 site)"/>
</dbReference>
<dbReference type="iPTMnet" id="P29322"/>
<dbReference type="PhosphoSitePlus" id="P29322"/>
<dbReference type="BioMuta" id="EPHA8"/>
<dbReference type="DMDM" id="19857975"/>
<dbReference type="CPTAC" id="CPTAC-2820"/>
<dbReference type="CPTAC" id="CPTAC-3204"/>
<dbReference type="jPOST" id="P29322"/>
<dbReference type="MassIVE" id="P29322"/>
<dbReference type="PaxDb" id="9606-ENSP00000166244"/>
<dbReference type="PeptideAtlas" id="P29322"/>
<dbReference type="ProteomicsDB" id="54538">
    <molecule id="P29322-1"/>
</dbReference>
<dbReference type="ProteomicsDB" id="54539">
    <molecule id="P29322-2"/>
</dbReference>
<dbReference type="Antibodypedia" id="4046">
    <property type="antibodies" value="170 antibodies from 33 providers"/>
</dbReference>
<dbReference type="DNASU" id="2046"/>
<dbReference type="Ensembl" id="ENST00000166244.8">
    <molecule id="P29322-1"/>
    <property type="protein sequence ID" value="ENSP00000166244.3"/>
    <property type="gene ID" value="ENSG00000070886.12"/>
</dbReference>
<dbReference type="Ensembl" id="ENST00000374644.8">
    <molecule id="P29322-2"/>
    <property type="protein sequence ID" value="ENSP00000363775.4"/>
    <property type="gene ID" value="ENSG00000070886.12"/>
</dbReference>
<dbReference type="GeneID" id="2046"/>
<dbReference type="KEGG" id="hsa:2046"/>
<dbReference type="MANE-Select" id="ENST00000166244.8">
    <property type="protein sequence ID" value="ENSP00000166244.3"/>
    <property type="RefSeq nucleotide sequence ID" value="NM_020526.5"/>
    <property type="RefSeq protein sequence ID" value="NP_065387.1"/>
</dbReference>
<dbReference type="UCSC" id="uc001bfw.4">
    <molecule id="P29322-1"/>
    <property type="organism name" value="human"/>
</dbReference>
<dbReference type="AGR" id="HGNC:3391"/>
<dbReference type="CTD" id="2046"/>
<dbReference type="DisGeNET" id="2046"/>
<dbReference type="GeneCards" id="EPHA8"/>
<dbReference type="HGNC" id="HGNC:3391">
    <property type="gene designation" value="EPHA8"/>
</dbReference>
<dbReference type="HPA" id="ENSG00000070886">
    <property type="expression patterns" value="Tissue enriched (choroid)"/>
</dbReference>
<dbReference type="MIM" id="176945">
    <property type="type" value="gene"/>
</dbReference>
<dbReference type="neXtProt" id="NX_P29322"/>
<dbReference type="OpenTargets" id="ENSG00000070886"/>
<dbReference type="PharmGKB" id="PA27823"/>
<dbReference type="VEuPathDB" id="HostDB:ENSG00000070886"/>
<dbReference type="eggNOG" id="KOG0196">
    <property type="taxonomic scope" value="Eukaryota"/>
</dbReference>
<dbReference type="GeneTree" id="ENSGT00940000160469"/>
<dbReference type="HOGENOM" id="CLU_000288_141_3_1"/>
<dbReference type="InParanoid" id="P29322"/>
<dbReference type="OMA" id="MRMNIDD"/>
<dbReference type="OrthoDB" id="4062651at2759"/>
<dbReference type="PAN-GO" id="P29322">
    <property type="GO annotations" value="8 GO annotations based on evolutionary models"/>
</dbReference>
<dbReference type="PhylomeDB" id="P29322"/>
<dbReference type="TreeFam" id="TF315608"/>
<dbReference type="BRENDA" id="2.7.10.1">
    <property type="organism ID" value="2681"/>
</dbReference>
<dbReference type="PathwayCommons" id="P29322"/>
<dbReference type="Reactome" id="R-HSA-2682334">
    <property type="pathway name" value="EPH-Ephrin signaling"/>
</dbReference>
<dbReference type="Reactome" id="R-HSA-3928663">
    <property type="pathway name" value="EPHA-mediated growth cone collapse"/>
</dbReference>
<dbReference type="Reactome" id="R-HSA-3928665">
    <property type="pathway name" value="EPH-ephrin mediated repulsion of cells"/>
</dbReference>
<dbReference type="SignaLink" id="P29322"/>
<dbReference type="SIGNOR" id="P29322"/>
<dbReference type="BioGRID-ORCS" id="2046">
    <property type="hits" value="11 hits in 1180 CRISPR screens"/>
</dbReference>
<dbReference type="ChiTaRS" id="EPHA8">
    <property type="organism name" value="human"/>
</dbReference>
<dbReference type="EvolutionaryTrace" id="P29322"/>
<dbReference type="GeneWiki" id="EPHA8"/>
<dbReference type="GenomeRNAi" id="2046"/>
<dbReference type="Pharos" id="P29322">
    <property type="development level" value="Tchem"/>
</dbReference>
<dbReference type="PRO" id="PR:P29322"/>
<dbReference type="Proteomes" id="UP000005640">
    <property type="component" value="Chromosome 1"/>
</dbReference>
<dbReference type="RNAct" id="P29322">
    <property type="molecule type" value="protein"/>
</dbReference>
<dbReference type="Bgee" id="ENSG00000070886">
    <property type="expression patterns" value="Expressed in endothelial cell and 47 other cell types or tissues"/>
</dbReference>
<dbReference type="GO" id="GO:0030425">
    <property type="term" value="C:dendrite"/>
    <property type="evidence" value="ECO:0000318"/>
    <property type="project" value="GO_Central"/>
</dbReference>
<dbReference type="GO" id="GO:0031901">
    <property type="term" value="C:early endosome membrane"/>
    <property type="evidence" value="ECO:0007669"/>
    <property type="project" value="UniProtKB-SubCell"/>
</dbReference>
<dbReference type="GO" id="GO:0043005">
    <property type="term" value="C:neuron projection"/>
    <property type="evidence" value="ECO:0000250"/>
    <property type="project" value="UniProtKB"/>
</dbReference>
<dbReference type="GO" id="GO:0005886">
    <property type="term" value="C:plasma membrane"/>
    <property type="evidence" value="ECO:0000250"/>
    <property type="project" value="UniProtKB"/>
</dbReference>
<dbReference type="GO" id="GO:0005524">
    <property type="term" value="F:ATP binding"/>
    <property type="evidence" value="ECO:0007669"/>
    <property type="project" value="UniProtKB-KW"/>
</dbReference>
<dbReference type="GO" id="GO:0005003">
    <property type="term" value="F:ephrin receptor activity"/>
    <property type="evidence" value="ECO:0000250"/>
    <property type="project" value="UniProtKB"/>
</dbReference>
<dbReference type="GO" id="GO:0005004">
    <property type="term" value="F:GPI-linked ephrin receptor activity"/>
    <property type="evidence" value="ECO:0000250"/>
    <property type="project" value="UniProtKB"/>
</dbReference>
<dbReference type="GO" id="GO:0019838">
    <property type="term" value="F:growth factor binding"/>
    <property type="evidence" value="ECO:0007669"/>
    <property type="project" value="Ensembl"/>
</dbReference>
<dbReference type="GO" id="GO:0005005">
    <property type="term" value="F:transmembrane-ephrin receptor activity"/>
    <property type="evidence" value="ECO:0000318"/>
    <property type="project" value="GO_Central"/>
</dbReference>
<dbReference type="GO" id="GO:0007411">
    <property type="term" value="P:axon guidance"/>
    <property type="evidence" value="ECO:0000250"/>
    <property type="project" value="UniProtKB"/>
</dbReference>
<dbReference type="GO" id="GO:0007155">
    <property type="term" value="P:cell adhesion"/>
    <property type="evidence" value="ECO:0007669"/>
    <property type="project" value="UniProtKB-KW"/>
</dbReference>
<dbReference type="GO" id="GO:0071372">
    <property type="term" value="P:cellular response to follicle-stimulating hormone stimulus"/>
    <property type="evidence" value="ECO:0007669"/>
    <property type="project" value="Ensembl"/>
</dbReference>
<dbReference type="GO" id="GO:0048013">
    <property type="term" value="P:ephrin receptor signaling pathway"/>
    <property type="evidence" value="ECO:0000250"/>
    <property type="project" value="UniProtKB"/>
</dbReference>
<dbReference type="GO" id="GO:0031175">
    <property type="term" value="P:neuron projection development"/>
    <property type="evidence" value="ECO:0000250"/>
    <property type="project" value="UniProtKB"/>
</dbReference>
<dbReference type="GO" id="GO:0016322">
    <property type="term" value="P:neuron remodeling"/>
    <property type="evidence" value="ECO:0000250"/>
    <property type="project" value="UniProtKB"/>
</dbReference>
<dbReference type="GO" id="GO:0043410">
    <property type="term" value="P:positive regulation of MAPK cascade"/>
    <property type="evidence" value="ECO:0000250"/>
    <property type="project" value="UniProtKB"/>
</dbReference>
<dbReference type="GO" id="GO:0051897">
    <property type="term" value="P:positive regulation of phosphatidylinositol 3-kinase/protein kinase B signal transduction"/>
    <property type="evidence" value="ECO:0000250"/>
    <property type="project" value="UniProtKB"/>
</dbReference>
<dbReference type="GO" id="GO:0030155">
    <property type="term" value="P:regulation of cell adhesion"/>
    <property type="evidence" value="ECO:0000250"/>
    <property type="project" value="UniProtKB"/>
</dbReference>
<dbReference type="GO" id="GO:0033628">
    <property type="term" value="P:regulation of cell adhesion mediated by integrin"/>
    <property type="evidence" value="ECO:0000250"/>
    <property type="project" value="UniProtKB"/>
</dbReference>
<dbReference type="GO" id="GO:0006929">
    <property type="term" value="P:substrate-dependent cell migration"/>
    <property type="evidence" value="ECO:0000250"/>
    <property type="project" value="UniProtKB"/>
</dbReference>
<dbReference type="CDD" id="cd00063">
    <property type="entry name" value="FN3"/>
    <property type="match status" value="2"/>
</dbReference>
<dbReference type="CDD" id="cd05066">
    <property type="entry name" value="PTKc_EphR_A"/>
    <property type="match status" value="1"/>
</dbReference>
<dbReference type="CDD" id="cd09550">
    <property type="entry name" value="SAM_EPH-A8"/>
    <property type="match status" value="1"/>
</dbReference>
<dbReference type="FunFam" id="2.10.50.10:FF:000001">
    <property type="entry name" value="Ephrin type-A receptor 5"/>
    <property type="match status" value="1"/>
</dbReference>
<dbReference type="FunFam" id="2.60.40.10:FF:000045">
    <property type="entry name" value="Ephrin type-A receptor 5"/>
    <property type="match status" value="1"/>
</dbReference>
<dbReference type="FunFam" id="2.60.40.1770:FF:000001">
    <property type="entry name" value="Ephrin type-A receptor 5"/>
    <property type="match status" value="1"/>
</dbReference>
<dbReference type="FunFam" id="1.10.510.10:FF:000130">
    <property type="entry name" value="Ephrin type-A receptor 7"/>
    <property type="match status" value="1"/>
</dbReference>
<dbReference type="FunFam" id="2.60.120.260:FF:000001">
    <property type="entry name" value="Ephrin type-A receptor 7"/>
    <property type="match status" value="1"/>
</dbReference>
<dbReference type="FunFam" id="2.60.40.10:FF:000190">
    <property type="entry name" value="Ephrin type-A receptor 7"/>
    <property type="match status" value="1"/>
</dbReference>
<dbReference type="FunFam" id="1.10.150.50:FF:000058">
    <property type="entry name" value="ephrin type-A receptor 8"/>
    <property type="match status" value="1"/>
</dbReference>
<dbReference type="FunFam" id="3.30.200.20:FF:000143">
    <property type="entry name" value="Ephrin type-B receptor 6"/>
    <property type="match status" value="1"/>
</dbReference>
<dbReference type="Gene3D" id="2.60.40.1770">
    <property type="entry name" value="ephrin a2 ectodomain"/>
    <property type="match status" value="1"/>
</dbReference>
<dbReference type="Gene3D" id="2.60.120.260">
    <property type="entry name" value="Galactose-binding domain-like"/>
    <property type="match status" value="1"/>
</dbReference>
<dbReference type="Gene3D" id="2.60.40.10">
    <property type="entry name" value="Immunoglobulins"/>
    <property type="match status" value="2"/>
</dbReference>
<dbReference type="Gene3D" id="3.30.200.20">
    <property type="entry name" value="Phosphorylase Kinase, domain 1"/>
    <property type="match status" value="1"/>
</dbReference>
<dbReference type="Gene3D" id="1.10.150.50">
    <property type="entry name" value="Transcription Factor, Ets-1"/>
    <property type="match status" value="1"/>
</dbReference>
<dbReference type="Gene3D" id="1.10.510.10">
    <property type="entry name" value="Transferase(Phosphotransferase) domain 1"/>
    <property type="match status" value="1"/>
</dbReference>
<dbReference type="Gene3D" id="2.10.50.10">
    <property type="entry name" value="Tumor Necrosis Factor Receptor, subunit A, domain 2"/>
    <property type="match status" value="1"/>
</dbReference>
<dbReference type="InterPro" id="IPR027936">
    <property type="entry name" value="Eph_TM"/>
</dbReference>
<dbReference type="InterPro" id="IPR001090">
    <property type="entry name" value="Ephrin_rcpt_lig-bd_dom"/>
</dbReference>
<dbReference type="InterPro" id="IPR050449">
    <property type="entry name" value="Ephrin_rcpt_TKs"/>
</dbReference>
<dbReference type="InterPro" id="IPR003961">
    <property type="entry name" value="FN3_dom"/>
</dbReference>
<dbReference type="InterPro" id="IPR036116">
    <property type="entry name" value="FN3_sf"/>
</dbReference>
<dbReference type="InterPro" id="IPR008979">
    <property type="entry name" value="Galactose-bd-like_sf"/>
</dbReference>
<dbReference type="InterPro" id="IPR013783">
    <property type="entry name" value="Ig-like_fold"/>
</dbReference>
<dbReference type="InterPro" id="IPR011009">
    <property type="entry name" value="Kinase-like_dom_sf"/>
</dbReference>
<dbReference type="InterPro" id="IPR000719">
    <property type="entry name" value="Prot_kinase_dom"/>
</dbReference>
<dbReference type="InterPro" id="IPR017441">
    <property type="entry name" value="Protein_kinase_ATP_BS"/>
</dbReference>
<dbReference type="InterPro" id="IPR001660">
    <property type="entry name" value="SAM"/>
</dbReference>
<dbReference type="InterPro" id="IPR013761">
    <property type="entry name" value="SAM/pointed_sf"/>
</dbReference>
<dbReference type="InterPro" id="IPR001245">
    <property type="entry name" value="Ser-Thr/Tyr_kinase_cat_dom"/>
</dbReference>
<dbReference type="InterPro" id="IPR008266">
    <property type="entry name" value="Tyr_kinase_AS"/>
</dbReference>
<dbReference type="InterPro" id="IPR020635">
    <property type="entry name" value="Tyr_kinase_cat_dom"/>
</dbReference>
<dbReference type="InterPro" id="IPR016257">
    <property type="entry name" value="Tyr_kinase_ephrin_rcpt"/>
</dbReference>
<dbReference type="InterPro" id="IPR001426">
    <property type="entry name" value="Tyr_kinase_rcpt_V_CS"/>
</dbReference>
<dbReference type="PANTHER" id="PTHR46877">
    <property type="entry name" value="EPH RECEPTOR A5"/>
    <property type="match status" value="1"/>
</dbReference>
<dbReference type="PANTHER" id="PTHR46877:SF7">
    <property type="entry name" value="EPHRIN TYPE-A RECEPTOR 8"/>
    <property type="match status" value="1"/>
</dbReference>
<dbReference type="Pfam" id="PF14575">
    <property type="entry name" value="EphA2_TM"/>
    <property type="match status" value="1"/>
</dbReference>
<dbReference type="Pfam" id="PF01404">
    <property type="entry name" value="Ephrin_lbd"/>
    <property type="match status" value="1"/>
</dbReference>
<dbReference type="Pfam" id="PF00041">
    <property type="entry name" value="fn3"/>
    <property type="match status" value="2"/>
</dbReference>
<dbReference type="Pfam" id="PF07714">
    <property type="entry name" value="PK_Tyr_Ser-Thr"/>
    <property type="match status" value="1"/>
</dbReference>
<dbReference type="Pfam" id="PF00536">
    <property type="entry name" value="SAM_1"/>
    <property type="match status" value="1"/>
</dbReference>
<dbReference type="PIRSF" id="PIRSF000666">
    <property type="entry name" value="TyrPK_ephrin_receptor"/>
    <property type="match status" value="1"/>
</dbReference>
<dbReference type="PRINTS" id="PR00014">
    <property type="entry name" value="FNTYPEIII"/>
</dbReference>
<dbReference type="PRINTS" id="PR00109">
    <property type="entry name" value="TYRKINASE"/>
</dbReference>
<dbReference type="SMART" id="SM00615">
    <property type="entry name" value="EPH_lbd"/>
    <property type="match status" value="1"/>
</dbReference>
<dbReference type="SMART" id="SM01411">
    <property type="entry name" value="Ephrin_rec_like"/>
    <property type="match status" value="1"/>
</dbReference>
<dbReference type="SMART" id="SM00060">
    <property type="entry name" value="FN3"/>
    <property type="match status" value="2"/>
</dbReference>
<dbReference type="SMART" id="SM00454">
    <property type="entry name" value="SAM"/>
    <property type="match status" value="1"/>
</dbReference>
<dbReference type="SMART" id="SM00219">
    <property type="entry name" value="TyrKc"/>
    <property type="match status" value="1"/>
</dbReference>
<dbReference type="SUPFAM" id="SSF49265">
    <property type="entry name" value="Fibronectin type III"/>
    <property type="match status" value="1"/>
</dbReference>
<dbReference type="SUPFAM" id="SSF49785">
    <property type="entry name" value="Galactose-binding domain-like"/>
    <property type="match status" value="1"/>
</dbReference>
<dbReference type="SUPFAM" id="SSF56112">
    <property type="entry name" value="Protein kinase-like (PK-like)"/>
    <property type="match status" value="1"/>
</dbReference>
<dbReference type="SUPFAM" id="SSF47769">
    <property type="entry name" value="SAM/Pointed domain"/>
    <property type="match status" value="1"/>
</dbReference>
<dbReference type="PROSITE" id="PS01186">
    <property type="entry name" value="EGF_2"/>
    <property type="match status" value="1"/>
</dbReference>
<dbReference type="PROSITE" id="PS51550">
    <property type="entry name" value="EPH_LBD"/>
    <property type="match status" value="1"/>
</dbReference>
<dbReference type="PROSITE" id="PS50853">
    <property type="entry name" value="FN3"/>
    <property type="match status" value="2"/>
</dbReference>
<dbReference type="PROSITE" id="PS00107">
    <property type="entry name" value="PROTEIN_KINASE_ATP"/>
    <property type="match status" value="1"/>
</dbReference>
<dbReference type="PROSITE" id="PS50011">
    <property type="entry name" value="PROTEIN_KINASE_DOM"/>
    <property type="match status" value="1"/>
</dbReference>
<dbReference type="PROSITE" id="PS00109">
    <property type="entry name" value="PROTEIN_KINASE_TYR"/>
    <property type="match status" value="1"/>
</dbReference>
<dbReference type="PROSITE" id="PS00790">
    <property type="entry name" value="RECEPTOR_TYR_KIN_V_1"/>
    <property type="match status" value="1"/>
</dbReference>
<dbReference type="PROSITE" id="PS00791">
    <property type="entry name" value="RECEPTOR_TYR_KIN_V_2"/>
    <property type="match status" value="1"/>
</dbReference>
<dbReference type="PROSITE" id="PS50105">
    <property type="entry name" value="SAM_DOMAIN"/>
    <property type="match status" value="1"/>
</dbReference>
<sequence>MAPARGRLPPALWVVTAAAAAATCVSAARGEVNLLDTSTIHGDWGWLTYPAHGWDSINEVDESFQPIHTYQVCNVMSPNQNNWLRTSWVPRDGARRVYAEIKFTLRDCNSMPGVLGTCKETFNLYYLESDRDLGASTQESQFLKIDTIAADESFTGADLGVRRLKLNTEVRSVGPLSKRGFYLAFQDIGACLAILSLRIYYKKCPAMVRNLAAFSEAVTGADSSSLVEVRGQCVRHSEERDTPKMYCSAEGEWLVPIGKCVCSAGYEERRDACVACELGFYKSAPGDQLCARCPPHSHSAAPAAQACHCDLSYYRAALDPPSSACTRPPSAPVNLISSVNGTSVTLEWAPPLDPGGRSDITYNAVCRRCPWALSRCEACGSGTRFVPQQTSLVQASLLVANLLAHMNYSFWIEAVNGVSDLSPEPRRAAVVNITTNQAAPSQVVVIRQERAGQTSVSLLWQEPEQPNGIILEYEIKYYEKDKEMQSYSTLKAVTTRATVSGLKPGTRYVFQVRARTSAGCGRFSQAMEVETGKPRPRYDTRTIVWICLTLITGLVVLLLLLICKKRHCGYSKAFQDSDEEKMHYQNGQAPPPVFLPLHHPPGKLPEPQFYAEPHTYEEPGRAGRSFTREIEASRIHIEKIIGSGDSGEVCYGRLRVPGQRDVPVAIKALKAGYTERQRRDFLSEASIMGQFDHPNIIRLEGVVTRGRLAMIVTEYMENGSLDTFLRTHDGQFTIMQLVGMLRGVGAGMRYLSDLGYVHRDLAARNVLVDSNLVCKVSDFGLSRVLEDDPDAAYTTTGGKIPIRWTAPEAIAFRTFSSASDVWSFGVVMWEVLAYGERPYWNMTNRDVISSVEEGYRLPAPMGCPHALHQLMLDCWHKDRAQRPRFSQIVSVLDALIRSPESLRATATVSRCPPPAFVRSCFDLRGGSGGGGGLTVGDWLDSIRMGRYRDHFAAGGYSSLGMVLRMNAQDVRALGITLMGHQKKILGSIQTMRAQLTSTQGPRRHL</sequence>
<protein>
    <recommendedName>
        <fullName>Ephrin type-A receptor 8</fullName>
        <ecNumber>2.7.10.1</ecNumber>
    </recommendedName>
    <alternativeName>
        <fullName>EPH- and ELK-related kinase</fullName>
    </alternativeName>
    <alternativeName>
        <fullName>EPH-like kinase 3</fullName>
        <shortName>EK3</shortName>
        <shortName>hEK3</shortName>
    </alternativeName>
    <alternativeName>
        <fullName>Tyrosine-protein kinase receptor EEK</fullName>
    </alternativeName>
</protein>
<name>EPHA8_HUMAN</name>
<evidence type="ECO:0000250" key="1"/>
<evidence type="ECO:0000250" key="2">
    <source>
        <dbReference type="UniProtKB" id="O09127"/>
    </source>
</evidence>
<evidence type="ECO:0000255" key="3"/>
<evidence type="ECO:0000255" key="4">
    <source>
        <dbReference type="PROSITE-ProRule" id="PRU00159"/>
    </source>
</evidence>
<evidence type="ECO:0000255" key="5">
    <source>
        <dbReference type="PROSITE-ProRule" id="PRU00184"/>
    </source>
</evidence>
<evidence type="ECO:0000255" key="6">
    <source>
        <dbReference type="PROSITE-ProRule" id="PRU00316"/>
    </source>
</evidence>
<evidence type="ECO:0000255" key="7">
    <source>
        <dbReference type="PROSITE-ProRule" id="PRU00883"/>
    </source>
</evidence>
<evidence type="ECO:0000255" key="8">
    <source>
        <dbReference type="PROSITE-ProRule" id="PRU10028"/>
    </source>
</evidence>
<evidence type="ECO:0000269" key="9">
    <source>
    </source>
</evidence>
<evidence type="ECO:0000269" key="10">
    <source>
    </source>
</evidence>
<evidence type="ECO:0000269" key="11">
    <source>
    </source>
</evidence>
<evidence type="ECO:0000269" key="12">
    <source>
    </source>
</evidence>
<evidence type="ECO:0000269" key="13">
    <source>
    </source>
</evidence>
<evidence type="ECO:0000269" key="14">
    <source>
    </source>
</evidence>
<evidence type="ECO:0000303" key="15">
    <source>
    </source>
</evidence>
<evidence type="ECO:0000305" key="16"/>
<evidence type="ECO:0007829" key="17">
    <source>
        <dbReference type="PDB" id="1UCV"/>
    </source>
</evidence>
<evidence type="ECO:0007829" key="18">
    <source>
        <dbReference type="PDB" id="1X5L"/>
    </source>
</evidence>
<evidence type="ECO:0007829" key="19">
    <source>
        <dbReference type="PDB" id="3KUL"/>
    </source>
</evidence>
<reference key="1">
    <citation type="journal article" date="2006" name="Nature">
        <title>The DNA sequence and biological annotation of human chromosome 1.</title>
        <authorList>
            <person name="Gregory S.G."/>
            <person name="Barlow K.F."/>
            <person name="McLay K.E."/>
            <person name="Kaul R."/>
            <person name="Swarbreck D."/>
            <person name="Dunham A."/>
            <person name="Scott C.E."/>
            <person name="Howe K.L."/>
            <person name="Woodfine K."/>
            <person name="Spencer C.C.A."/>
            <person name="Jones M.C."/>
            <person name="Gillson C."/>
            <person name="Searle S."/>
            <person name="Zhou Y."/>
            <person name="Kokocinski F."/>
            <person name="McDonald L."/>
            <person name="Evans R."/>
            <person name="Phillips K."/>
            <person name="Atkinson A."/>
            <person name="Cooper R."/>
            <person name="Jones C."/>
            <person name="Hall R.E."/>
            <person name="Andrews T.D."/>
            <person name="Lloyd C."/>
            <person name="Ainscough R."/>
            <person name="Almeida J.P."/>
            <person name="Ambrose K.D."/>
            <person name="Anderson F."/>
            <person name="Andrew R.W."/>
            <person name="Ashwell R.I.S."/>
            <person name="Aubin K."/>
            <person name="Babbage A.K."/>
            <person name="Bagguley C.L."/>
            <person name="Bailey J."/>
            <person name="Beasley H."/>
            <person name="Bethel G."/>
            <person name="Bird C.P."/>
            <person name="Bray-Allen S."/>
            <person name="Brown J.Y."/>
            <person name="Brown A.J."/>
            <person name="Buckley D."/>
            <person name="Burton J."/>
            <person name="Bye J."/>
            <person name="Carder C."/>
            <person name="Chapman J.C."/>
            <person name="Clark S.Y."/>
            <person name="Clarke G."/>
            <person name="Clee C."/>
            <person name="Cobley V."/>
            <person name="Collier R.E."/>
            <person name="Corby N."/>
            <person name="Coville G.J."/>
            <person name="Davies J."/>
            <person name="Deadman R."/>
            <person name="Dunn M."/>
            <person name="Earthrowl M."/>
            <person name="Ellington A.G."/>
            <person name="Errington H."/>
            <person name="Frankish A."/>
            <person name="Frankland J."/>
            <person name="French L."/>
            <person name="Garner P."/>
            <person name="Garnett J."/>
            <person name="Gay L."/>
            <person name="Ghori M.R.J."/>
            <person name="Gibson R."/>
            <person name="Gilby L.M."/>
            <person name="Gillett W."/>
            <person name="Glithero R.J."/>
            <person name="Grafham D.V."/>
            <person name="Griffiths C."/>
            <person name="Griffiths-Jones S."/>
            <person name="Grocock R."/>
            <person name="Hammond S."/>
            <person name="Harrison E.S.I."/>
            <person name="Hart E."/>
            <person name="Haugen E."/>
            <person name="Heath P.D."/>
            <person name="Holmes S."/>
            <person name="Holt K."/>
            <person name="Howden P.J."/>
            <person name="Hunt A.R."/>
            <person name="Hunt S.E."/>
            <person name="Hunter G."/>
            <person name="Isherwood J."/>
            <person name="James R."/>
            <person name="Johnson C."/>
            <person name="Johnson D."/>
            <person name="Joy A."/>
            <person name="Kay M."/>
            <person name="Kershaw J.K."/>
            <person name="Kibukawa M."/>
            <person name="Kimberley A.M."/>
            <person name="King A."/>
            <person name="Knights A.J."/>
            <person name="Lad H."/>
            <person name="Laird G."/>
            <person name="Lawlor S."/>
            <person name="Leongamornlert D.A."/>
            <person name="Lloyd D.M."/>
            <person name="Loveland J."/>
            <person name="Lovell J."/>
            <person name="Lush M.J."/>
            <person name="Lyne R."/>
            <person name="Martin S."/>
            <person name="Mashreghi-Mohammadi M."/>
            <person name="Matthews L."/>
            <person name="Matthews N.S.W."/>
            <person name="McLaren S."/>
            <person name="Milne S."/>
            <person name="Mistry S."/>
            <person name="Moore M.J.F."/>
            <person name="Nickerson T."/>
            <person name="O'Dell C.N."/>
            <person name="Oliver K."/>
            <person name="Palmeiri A."/>
            <person name="Palmer S.A."/>
            <person name="Parker A."/>
            <person name="Patel D."/>
            <person name="Pearce A.V."/>
            <person name="Peck A.I."/>
            <person name="Pelan S."/>
            <person name="Phelps K."/>
            <person name="Phillimore B.J."/>
            <person name="Plumb R."/>
            <person name="Rajan J."/>
            <person name="Raymond C."/>
            <person name="Rouse G."/>
            <person name="Saenphimmachak C."/>
            <person name="Sehra H.K."/>
            <person name="Sheridan E."/>
            <person name="Shownkeen R."/>
            <person name="Sims S."/>
            <person name="Skuce C.D."/>
            <person name="Smith M."/>
            <person name="Steward C."/>
            <person name="Subramanian S."/>
            <person name="Sycamore N."/>
            <person name="Tracey A."/>
            <person name="Tromans A."/>
            <person name="Van Helmond Z."/>
            <person name="Wall M."/>
            <person name="Wallis J.M."/>
            <person name="White S."/>
            <person name="Whitehead S.L."/>
            <person name="Wilkinson J.E."/>
            <person name="Willey D.L."/>
            <person name="Williams H."/>
            <person name="Wilming L."/>
            <person name="Wray P.W."/>
            <person name="Wu Z."/>
            <person name="Coulson A."/>
            <person name="Vaudin M."/>
            <person name="Sulston J.E."/>
            <person name="Durbin R.M."/>
            <person name="Hubbard T."/>
            <person name="Wooster R."/>
            <person name="Dunham I."/>
            <person name="Carter N.P."/>
            <person name="McVean G."/>
            <person name="Ross M.T."/>
            <person name="Harrow J."/>
            <person name="Olson M.V."/>
            <person name="Beck S."/>
            <person name="Rogers J."/>
            <person name="Bentley D.R."/>
        </authorList>
    </citation>
    <scope>NUCLEOTIDE SEQUENCE [LARGE SCALE GENOMIC DNA]</scope>
</reference>
<reference key="2">
    <citation type="journal article" date="2004" name="Genome Res.">
        <title>The status, quality, and expansion of the NIH full-length cDNA project: the Mammalian Gene Collection (MGC).</title>
        <authorList>
            <consortium name="The MGC Project Team"/>
        </authorList>
    </citation>
    <scope>NUCLEOTIDE SEQUENCE [LARGE SCALE MRNA] (ISOFORM 2)</scope>
    <source>
        <tissue>Brain</tissue>
        <tissue>Eye</tissue>
    </source>
</reference>
<reference key="3">
    <citation type="journal article" date="2000" name="DNA Res.">
        <title>Prediction of the coding sequences of unidentified human genes. XVII. The complete sequences of 100 new cDNA clones from brain which code for large proteins in vitro.</title>
        <authorList>
            <person name="Nagase T."/>
            <person name="Kikuno R."/>
            <person name="Ishikawa K."/>
            <person name="Hirosawa M."/>
            <person name="Ohara O."/>
        </authorList>
    </citation>
    <scope>NUCLEOTIDE SEQUENCE [LARGE SCALE MRNA] OF 153-1005 (ISOFORM 1)</scope>
    <scope>VARIANT GLN-612</scope>
    <source>
        <tissue>Brain</tissue>
    </source>
</reference>
<reference key="4">
    <citation type="journal article" date="1991" name="Oncogene">
        <title>eek and erk, new members of the eph subclass of receptor protein-tyrosine kinases.</title>
        <authorList>
            <person name="Chan J."/>
            <person name="Watt V.M."/>
        </authorList>
    </citation>
    <scope>NUCLEOTIDE SEQUENCE [GENOMIC DNA] OF 706-726</scope>
</reference>
<reference key="5">
    <citation type="journal article" date="1997" name="Cell">
        <title>Unified nomenclature for Eph family receptors and their ligands, the ephrins.</title>
        <authorList>
            <consortium name="Eph nomenclature committee"/>
        </authorList>
    </citation>
    <scope>NOMENCLATURE</scope>
</reference>
<reference key="6">
    <citation type="journal article" date="1999" name="Oncogene">
        <title>Phosphorylation at Tyr-838 in the kinase domain of EphA8 modulates Fyn binding to the Tyr-615 site by enhancing tyrosine kinase activity.</title>
        <authorList>
            <person name="Choi S."/>
            <person name="Park S."/>
        </authorList>
    </citation>
    <scope>INTERACTION WITH FYN</scope>
</reference>
<reference key="7">
    <citation type="journal article" date="2001" name="Mol. Cell. Biol.">
        <title>The EphA8 receptor regulates integrin activity through p110gamma phosphatidylinositol-3 kinase in a tyrosine kinase activity-independent manner.</title>
        <authorList>
            <person name="Gu C."/>
            <person name="Park S."/>
        </authorList>
    </citation>
    <scope>INTERACTION WITH PIK3CG</scope>
</reference>
<reference key="8">
    <citation type="journal article" date="2007" name="Mol. Cell. Biol.">
        <title>Identification of phosphotyrosine binding domain-containing proteins as novel downstream targets of the EphA8 signaling function.</title>
        <authorList>
            <person name="Shin J."/>
            <person name="Gu C."/>
            <person name="Park E."/>
            <person name="Park S."/>
        </authorList>
    </citation>
    <scope>INTERACTION WITH ANKS1B</scope>
</reference>
<reference key="9">
    <citation type="journal article" date="2010" name="Mol. Cells">
        <title>EphA8-ephrinA5 signaling and clathrin-mediated endocytosis is regulated by Tiam-1, a Rac-specific guanine nucleotide exchange factor.</title>
        <authorList>
            <person name="Yoo S."/>
            <person name="Shin J."/>
            <person name="Park S."/>
        </authorList>
    </citation>
    <scope>INTERACTION WITH TIAM1</scope>
</reference>
<reference key="10">
    <citation type="submission" date="2005-11" db="PDB data bank">
        <title>Solution structure of the second FN3 domain and of sterile alpha motif (SAM) domain of EPH receptor A8 protein.</title>
        <authorList>
            <consortium name="RIKEN structural genomics initiative (RSGI)"/>
        </authorList>
    </citation>
    <scope>STRUCTURE BY NMR OF 437-534 AND 932-1000</scope>
</reference>
<reference key="11">
    <citation type="journal article" date="2007" name="Nature">
        <title>Patterns of somatic mutation in human cancer genomes.</title>
        <authorList>
            <person name="Greenman C."/>
            <person name="Stephens P."/>
            <person name="Smith R."/>
            <person name="Dalgliesh G.L."/>
            <person name="Hunter C."/>
            <person name="Bignell G."/>
            <person name="Davies H."/>
            <person name="Teague J."/>
            <person name="Butler A."/>
            <person name="Stevens C."/>
            <person name="Edkins S."/>
            <person name="O'Meara S."/>
            <person name="Vastrik I."/>
            <person name="Schmidt E.E."/>
            <person name="Avis T."/>
            <person name="Barthorpe S."/>
            <person name="Bhamra G."/>
            <person name="Buck G."/>
            <person name="Choudhury B."/>
            <person name="Clements J."/>
            <person name="Cole J."/>
            <person name="Dicks E."/>
            <person name="Forbes S."/>
            <person name="Gray K."/>
            <person name="Halliday K."/>
            <person name="Harrison R."/>
            <person name="Hills K."/>
            <person name="Hinton J."/>
            <person name="Jenkinson A."/>
            <person name="Jones D."/>
            <person name="Menzies A."/>
            <person name="Mironenko T."/>
            <person name="Perry J."/>
            <person name="Raine K."/>
            <person name="Richardson D."/>
            <person name="Shepherd R."/>
            <person name="Small A."/>
            <person name="Tofts C."/>
            <person name="Varian J."/>
            <person name="Webb T."/>
            <person name="West S."/>
            <person name="Widaa S."/>
            <person name="Yates A."/>
            <person name="Cahill D.P."/>
            <person name="Louis D.N."/>
            <person name="Goldstraw P."/>
            <person name="Nicholson A.G."/>
            <person name="Brasseur F."/>
            <person name="Looijenga L."/>
            <person name="Weber B.L."/>
            <person name="Chiew Y.-E."/>
            <person name="DeFazio A."/>
            <person name="Greaves M.F."/>
            <person name="Green A.R."/>
            <person name="Campbell P."/>
            <person name="Birney E."/>
            <person name="Easton D.F."/>
            <person name="Chenevix-Trench G."/>
            <person name="Tan M.-H."/>
            <person name="Khoo S.K."/>
            <person name="Teh B.T."/>
            <person name="Yuen S.T."/>
            <person name="Leung S.Y."/>
            <person name="Wooster R."/>
            <person name="Futreal P.A."/>
            <person name="Stratton M.R."/>
        </authorList>
    </citation>
    <scope>VARIANTS [LARGE SCALE ANALYSIS] SER-45; LEU-60; LYS-123; CYS-179; LEU-198 AND LEU-860</scope>
</reference>
<keyword id="KW-0002">3D-structure</keyword>
<keyword id="KW-0025">Alternative splicing</keyword>
<keyword id="KW-0067">ATP-binding</keyword>
<keyword id="KW-0130">Cell adhesion</keyword>
<keyword id="KW-1003">Cell membrane</keyword>
<keyword id="KW-0966">Cell projection</keyword>
<keyword id="KW-0217">Developmental protein</keyword>
<keyword id="KW-0967">Endosome</keyword>
<keyword id="KW-0325">Glycoprotein</keyword>
<keyword id="KW-0418">Kinase</keyword>
<keyword id="KW-0472">Membrane</keyword>
<keyword id="KW-0524">Neurogenesis</keyword>
<keyword id="KW-0547">Nucleotide-binding</keyword>
<keyword id="KW-0597">Phosphoprotein</keyword>
<keyword id="KW-1267">Proteomics identification</keyword>
<keyword id="KW-0675">Receptor</keyword>
<keyword id="KW-1185">Reference proteome</keyword>
<keyword id="KW-0677">Repeat</keyword>
<keyword id="KW-0732">Signal</keyword>
<keyword id="KW-0808">Transferase</keyword>
<keyword id="KW-0812">Transmembrane</keyword>
<keyword id="KW-1133">Transmembrane helix</keyword>
<keyword id="KW-0829">Tyrosine-protein kinase</keyword>
<keyword id="KW-0832">Ubl conjugation</keyword>
<gene>
    <name type="primary">EPHA8</name>
    <name type="synonym">EEK</name>
    <name type="synonym">HEK3</name>
    <name type="synonym">KIAA1459</name>
</gene>
<proteinExistence type="evidence at protein level"/>
<accession>P29322</accession>
<accession>Q6IN80</accession>
<accession>Q8IUX6</accession>
<accession>Q9NUA9</accession>
<accession>Q9P269</accession>